<dbReference type="EC" id="7.1.3.1" evidence="1 2"/>
<dbReference type="EMBL" id="AB009077">
    <property type="protein sequence ID" value="BAA23649.1"/>
    <property type="molecule type" value="mRNA"/>
</dbReference>
<dbReference type="EMBL" id="U31467">
    <property type="protein sequence ID" value="AAC49175.1"/>
    <property type="molecule type" value="mRNA"/>
</dbReference>
<dbReference type="PIR" id="A34486">
    <property type="entry name" value="A34486"/>
</dbReference>
<dbReference type="PIR" id="T07801">
    <property type="entry name" value="T07801"/>
</dbReference>
<dbReference type="PIR" id="T10841">
    <property type="entry name" value="T10841"/>
</dbReference>
<dbReference type="PDB" id="4A01">
    <property type="method" value="X-ray"/>
    <property type="resolution" value="2.35 A"/>
    <property type="chains" value="A/B=1-766"/>
</dbReference>
<dbReference type="PDB" id="5GPJ">
    <property type="method" value="X-ray"/>
    <property type="resolution" value="3.50 A"/>
    <property type="chains" value="A/B/C/D=1-766"/>
</dbReference>
<dbReference type="PDB" id="6AFS">
    <property type="method" value="X-ray"/>
    <property type="resolution" value="2.30 A"/>
    <property type="chains" value="A/B=1-766"/>
</dbReference>
<dbReference type="PDB" id="6AFT">
    <property type="method" value="X-ray"/>
    <property type="resolution" value="2.49 A"/>
    <property type="chains" value="A/B=1-766"/>
</dbReference>
<dbReference type="PDB" id="6AFU">
    <property type="method" value="X-ray"/>
    <property type="resolution" value="2.80 A"/>
    <property type="chains" value="A/B=1-766"/>
</dbReference>
<dbReference type="PDB" id="6AFV">
    <property type="method" value="X-ray"/>
    <property type="resolution" value="2.70 A"/>
    <property type="chains" value="A/B=1-766"/>
</dbReference>
<dbReference type="PDB" id="6AFW">
    <property type="method" value="X-ray"/>
    <property type="resolution" value="2.19 A"/>
    <property type="chains" value="A/B=1-766"/>
</dbReference>
<dbReference type="PDB" id="6AFX">
    <property type="method" value="X-ray"/>
    <property type="resolution" value="2.30 A"/>
    <property type="chains" value="A/B=1-766"/>
</dbReference>
<dbReference type="PDB" id="6AFY">
    <property type="method" value="X-ray"/>
    <property type="resolution" value="2.40 A"/>
    <property type="chains" value="A/B=1-766"/>
</dbReference>
<dbReference type="PDB" id="6AFZ">
    <property type="method" value="X-ray"/>
    <property type="resolution" value="2.48 A"/>
    <property type="chains" value="A/B=1-766"/>
</dbReference>
<dbReference type="PDBsum" id="4A01"/>
<dbReference type="PDBsum" id="5GPJ"/>
<dbReference type="PDBsum" id="6AFS"/>
<dbReference type="PDBsum" id="6AFT"/>
<dbReference type="PDBsum" id="6AFU"/>
<dbReference type="PDBsum" id="6AFV"/>
<dbReference type="PDBsum" id="6AFW"/>
<dbReference type="PDBsum" id="6AFX"/>
<dbReference type="PDBsum" id="6AFY"/>
<dbReference type="PDBsum" id="6AFZ"/>
<dbReference type="SMR" id="P21616"/>
<dbReference type="DIP" id="DIP-59673N"/>
<dbReference type="STRING" id="3916.P21616"/>
<dbReference type="TCDB" id="3.A.10.1.8">
    <property type="family name" value="the h(+), na(+)-translocating pyrophosphatase (m(+)-ppase) family"/>
</dbReference>
<dbReference type="KEGG" id="vra:106768298"/>
<dbReference type="SABIO-RK" id="P21616"/>
<dbReference type="EvolutionaryTrace" id="P21616"/>
<dbReference type="Proteomes" id="UP000087766">
    <property type="component" value="Unplaced"/>
</dbReference>
<dbReference type="GO" id="GO:0005774">
    <property type="term" value="C:vacuolar membrane"/>
    <property type="evidence" value="ECO:0007669"/>
    <property type="project" value="UniProtKB-SubCell"/>
</dbReference>
<dbReference type="GO" id="GO:0009678">
    <property type="term" value="F:diphosphate hydrolysis-driven proton transmembrane transporter activity"/>
    <property type="evidence" value="ECO:0007669"/>
    <property type="project" value="UniProtKB-EC"/>
</dbReference>
<dbReference type="GO" id="GO:0004427">
    <property type="term" value="F:inorganic diphosphate phosphatase activity"/>
    <property type="evidence" value="ECO:0007669"/>
    <property type="project" value="InterPro"/>
</dbReference>
<dbReference type="GO" id="GO:0046872">
    <property type="term" value="F:metal ion binding"/>
    <property type="evidence" value="ECO:0007669"/>
    <property type="project" value="UniProtKB-KW"/>
</dbReference>
<dbReference type="HAMAP" id="MF_01129">
    <property type="entry name" value="PPase_energized_pump"/>
    <property type="match status" value="1"/>
</dbReference>
<dbReference type="InterPro" id="IPR004131">
    <property type="entry name" value="PPase-energised_H-pump"/>
</dbReference>
<dbReference type="NCBIfam" id="NF001960">
    <property type="entry name" value="PRK00733.3-5"/>
    <property type="match status" value="1"/>
</dbReference>
<dbReference type="NCBIfam" id="TIGR01104">
    <property type="entry name" value="V_PPase"/>
    <property type="match status" value="1"/>
</dbReference>
<dbReference type="PANTHER" id="PTHR31998">
    <property type="entry name" value="K(+)-INSENSITIVE PYROPHOSPHATE-ENERGIZED PROTON PUMP"/>
    <property type="match status" value="1"/>
</dbReference>
<dbReference type="Pfam" id="PF03030">
    <property type="entry name" value="H_PPase"/>
    <property type="match status" value="1"/>
</dbReference>
<dbReference type="PIRSF" id="PIRSF001265">
    <property type="entry name" value="H+-PPase"/>
    <property type="match status" value="1"/>
</dbReference>
<sequence>MGAAILPDLGTEILIPVCAVIGIAFALFQWLLVSKVKLSAVRDASPNAAAKNGYNDYLIEEEEGINDHNVVVKCAEIQNAISEGATSFLFTEYKYVGIFMVAFAILIFLFLGSVEGFSTSPQACSYDKTKTCKPALATAIFSTVSFLLGGVTSLVSGFLGMKIATYANARTTLEARKGVGKAFITAFRSGAVMGFLLAANGLLVLYIAINLFKIYYGDDWGGLFEAITGYGLGGSSMALFGRVGGGIYTKAADVGADLVGKVERNIPEDDPRNPAVIADNVGDNVGDIAGMGSDLFGSYAESSCAALVVASISSFGLNHELTAMLYPLIVSSVGILVCLLTTLFATDFFEIKAVKEIEPALKKQLVISTVLMTIGVAVVSFVALPTSFTIFNFGVQKDVKSWQLFLCVAVGLWAGLIIGFVTEYYTSNAYSPVQDVADSCRTGAATNVIFGLALGYKSVIIPIFAIAISIFVSFTFAAMYGIAVAALGMLSTIATGLAIDAYGPISDNAGGIAEMAGMSHRIRERTDALDAAGNTTAAIGKGFAIGSAALVSLALFGAFVSRASITTVDVLTPKVFIGLIVGAMLPYWFSAMTMKSVGSAALKMVEEVRRQFNTIPGLMEGTAKPDYATCVKISTDASIKEMIPPGALVMLTPLVVGILFGVETLSGVLAGSLVSGVQIAISASNTGGAWDNAKKYIEAGASEHARSLGPKGSDCHKAAVIGDTIGDPLKDTSGPSLNILIKLMAVESLVFAPFFATHGGLLFKIF</sequence>
<reference key="1">
    <citation type="journal article" date="1998" name="Plant Physiol.">
        <title>Molecular cloning of vacuolar H(+)-pyrophosphatase and its developmental expression in growing hypocotyl of mung bean.</title>
        <authorList>
            <person name="Nakanishi Y."/>
            <person name="Maeshima M."/>
        </authorList>
    </citation>
    <scope>NUCLEOTIDE SEQUENCE [MRNA]</scope>
    <scope>FUNCTION</scope>
    <scope>SUBCELLULAR LOCATION</scope>
    <scope>DEVELOPMENTAL STAGE</scope>
    <source>
        <strain>cv. Wilczek</strain>
        <tissue>Hypocotyl</tissue>
    </source>
</reference>
<reference key="2">
    <citation type="online journal article" date="1995" name="Plant Gene Register">
        <title>Vacuolar H+-pyrophosphatase cDNA from etiolated mung bean seedlings.</title>
        <authorList>
            <person name="Hung S.-H."/>
            <person name="Chiu S.-J."/>
            <person name="Lin L.-Y."/>
            <person name="Pan R.L."/>
        </authorList>
        <locator>PGR95-082</locator>
    </citation>
    <scope>NUCLEOTIDE SEQUENCE [MRNA]</scope>
    <source>
        <tissue>Hypocotyl</tissue>
    </source>
</reference>
<reference key="3">
    <citation type="journal article" date="1989" name="J. Biol. Chem.">
        <title>Purification and properties of vacuolar membrane proton-translocating inorganic pyrophosphatase from mung bean.</title>
        <authorList>
            <person name="Maeshima M."/>
            <person name="Yoshida S."/>
        </authorList>
    </citation>
    <scope>PROTEIN SEQUENCE OF 2-31</scope>
    <scope>FUNCTION</scope>
    <scope>ACTIVITY REGULATION</scope>
    <scope>SUBCELLULAR LOCATION</scope>
    <source>
        <strain>cv. Wilczek</strain>
        <tissue>Hypocotyl</tissue>
    </source>
</reference>
<reference key="4">
    <citation type="journal article" date="1999" name="Biochem. J.">
        <title>Localization of a carboxylic residue possibly involved in the inhibition of vacuolar H+-pyrophosphatase by N,N'-dicyclohexylcarbodi-imide.</title>
        <authorList>
            <person name="Yang S.J."/>
            <person name="Jiang S.S."/>
            <person name="Kuo S.Y."/>
            <person name="Hung S.H."/>
            <person name="Tam M.F."/>
            <person name="Pan R.L."/>
        </authorList>
    </citation>
    <scope>ACTIVITY REGULATION</scope>
    <scope>CATALYTIC ACTIVITY</scope>
    <scope>FUNCTION</scope>
    <scope>SUBCELLULAR LOCATION</scope>
    <scope>PROTEIN SEQUENCE OF 277-286</scope>
</reference>
<reference key="5">
    <citation type="journal article" date="2012" name="Nature">
        <title>Crystal structure of a membrane-embedded H+-translocating pyrophosphatase.</title>
        <authorList>
            <person name="Lin S.M."/>
            <person name="Tsai J.Y."/>
            <person name="Hsiao C.D."/>
            <person name="Huang Y.T."/>
            <person name="Chiu C.L."/>
            <person name="Liu M.H."/>
            <person name="Tung J.Y."/>
            <person name="Liu T.H."/>
            <person name="Pan R.L."/>
            <person name="Sun Y.J."/>
        </authorList>
    </citation>
    <scope>X-RAY CRYSTALLOGRAPHY (2.35 ANGSTROMS) IN COMPLEX WITH PYROPHOSPHATE ANALOG AND MAGNESIUM</scope>
    <scope>TOPOLOGY</scope>
    <scope>SUBCELLULAR LOCATION</scope>
    <scope>SUBUNIT</scope>
    <scope>DOMAIN</scope>
    <scope>MUTAGENESIS OF ASP-294 AND LYS-742</scope>
    <scope>FUNCTION</scope>
    <scope>CATALYTIC ACTIVITY</scope>
</reference>
<keyword id="KW-0002">3D-structure</keyword>
<keyword id="KW-0903">Direct protein sequencing</keyword>
<keyword id="KW-1015">Disulfide bond</keyword>
<keyword id="KW-0375">Hydrogen ion transport</keyword>
<keyword id="KW-0406">Ion transport</keyword>
<keyword id="KW-0460">Magnesium</keyword>
<keyword id="KW-0472">Membrane</keyword>
<keyword id="KW-0479">Metal-binding</keyword>
<keyword id="KW-1185">Reference proteome</keyword>
<keyword id="KW-1278">Translocase</keyword>
<keyword id="KW-0812">Transmembrane</keyword>
<keyword id="KW-1133">Transmembrane helix</keyword>
<keyword id="KW-0813">Transport</keyword>
<keyword id="KW-0926">Vacuole</keyword>
<evidence type="ECO:0000269" key="1">
    <source>
    </source>
</evidence>
<evidence type="ECO:0000269" key="2">
    <source>
    </source>
</evidence>
<evidence type="ECO:0000269" key="3">
    <source>
    </source>
</evidence>
<evidence type="ECO:0000269" key="4">
    <source>
    </source>
</evidence>
<evidence type="ECO:0000305" key="5"/>
<evidence type="ECO:0000305" key="6">
    <source>
    </source>
</evidence>
<evidence type="ECO:0007829" key="7">
    <source>
        <dbReference type="PDB" id="4A01"/>
    </source>
</evidence>
<evidence type="ECO:0007829" key="8">
    <source>
        <dbReference type="PDB" id="6AFW"/>
    </source>
</evidence>
<organism>
    <name type="scientific">Vigna radiata var. radiata</name>
    <name type="common">Mung bean</name>
    <name type="synonym">Phaseolus aureus</name>
    <dbReference type="NCBI Taxonomy" id="3916"/>
    <lineage>
        <taxon>Eukaryota</taxon>
        <taxon>Viridiplantae</taxon>
        <taxon>Streptophyta</taxon>
        <taxon>Embryophyta</taxon>
        <taxon>Tracheophyta</taxon>
        <taxon>Spermatophyta</taxon>
        <taxon>Magnoliopsida</taxon>
        <taxon>eudicotyledons</taxon>
        <taxon>Gunneridae</taxon>
        <taxon>Pentapetalae</taxon>
        <taxon>rosids</taxon>
        <taxon>fabids</taxon>
        <taxon>Fabales</taxon>
        <taxon>Fabaceae</taxon>
        <taxon>Papilionoideae</taxon>
        <taxon>50 kb inversion clade</taxon>
        <taxon>NPAAA clade</taxon>
        <taxon>indigoferoid/millettioid clade</taxon>
        <taxon>Phaseoleae</taxon>
        <taxon>Vigna</taxon>
    </lineage>
</organism>
<accession>P21616</accession>
<accession>O22124</accession>
<accession>Q41686</accession>
<feature type="initiator methionine" description="Removed" evidence="3">
    <location>
        <position position="1"/>
    </location>
</feature>
<feature type="chain" id="PRO_0000217043" description="Pyrophosphate-energized vacuolar membrane proton pump">
    <location>
        <begin position="2"/>
        <end position="766"/>
    </location>
</feature>
<feature type="topological domain" description="Intravacuolar" evidence="6">
    <location>
        <begin position="2"/>
        <end position="8"/>
    </location>
</feature>
<feature type="transmembrane region" description="Helical">
    <location>
        <begin position="9"/>
        <end position="35"/>
    </location>
</feature>
<feature type="topological domain" description="Cytoplasmic" evidence="6">
    <location>
        <begin position="36"/>
        <end position="84"/>
    </location>
</feature>
<feature type="transmembrane region" description="Helical">
    <location>
        <begin position="85"/>
        <end position="114"/>
    </location>
</feature>
<feature type="topological domain" description="Intravacuolar" evidence="6">
    <location>
        <begin position="115"/>
        <end position="135"/>
    </location>
</feature>
<feature type="transmembrane region" description="Helical">
    <location>
        <begin position="136"/>
        <end position="163"/>
    </location>
</feature>
<feature type="topological domain" description="Cytoplasmic" evidence="6">
    <location>
        <begin position="164"/>
        <end position="186"/>
    </location>
</feature>
<feature type="transmembrane region" description="Helical">
    <location>
        <begin position="187"/>
        <end position="216"/>
    </location>
</feature>
<feature type="topological domain" description="Intravacuolar" evidence="6">
    <location>
        <begin position="217"/>
        <end position="219"/>
    </location>
</feature>
<feature type="transmembrane region" description="Helical">
    <location>
        <begin position="220"/>
        <end position="248"/>
    </location>
</feature>
<feature type="topological domain" description="Cytoplasmic" evidence="6">
    <location>
        <begin position="249"/>
        <end position="286"/>
    </location>
</feature>
<feature type="transmembrane region" description="Helical">
    <location>
        <begin position="287"/>
        <end position="312"/>
    </location>
</feature>
<feature type="topological domain" description="Intravacuolar" evidence="6">
    <location>
        <begin position="313"/>
        <end position="320"/>
    </location>
</feature>
<feature type="transmembrane region" description="Helical">
    <location>
        <begin position="321"/>
        <end position="346"/>
    </location>
</feature>
<feature type="topological domain" description="Cytoplasmic" evidence="6">
    <location>
        <begin position="347"/>
        <end position="354"/>
    </location>
</feature>
<feature type="transmembrane region" description="Helical">
    <location>
        <begin position="355"/>
        <end position="382"/>
    </location>
</feature>
<feature type="topological domain" description="Intravacuolar" evidence="6">
    <location>
        <begin position="383"/>
        <end position="401"/>
    </location>
</feature>
<feature type="transmembrane region" description="Helical">
    <location>
        <begin position="402"/>
        <end position="425"/>
    </location>
</feature>
<feature type="topological domain" description="Cytoplasmic" evidence="6">
    <location>
        <begin position="426"/>
        <end position="447"/>
    </location>
</feature>
<feature type="transmembrane region" description="Helical">
    <location>
        <begin position="448"/>
        <end position="472"/>
    </location>
</feature>
<feature type="topological domain" description="Intravacuolar" evidence="6">
    <location>
        <begin position="473"/>
        <end position="478"/>
    </location>
</feature>
<feature type="transmembrane region" description="Helical">
    <location>
        <begin position="479"/>
        <end position="505"/>
    </location>
</feature>
<feature type="topological domain" description="Cytoplasmic" evidence="6">
    <location>
        <begin position="506"/>
        <end position="534"/>
    </location>
</feature>
<feature type="transmembrane region" description="Helical">
    <location>
        <begin position="535"/>
        <end position="563"/>
    </location>
</feature>
<feature type="topological domain" description="Intravacuolar" evidence="6">
    <location>
        <begin position="564"/>
        <end position="573"/>
    </location>
</feature>
<feature type="transmembrane region" description="Helical">
    <location>
        <begin position="574"/>
        <end position="602"/>
    </location>
</feature>
<feature type="topological domain" description="Cytoplasmic" evidence="6">
    <location>
        <begin position="603"/>
        <end position="631"/>
    </location>
</feature>
<feature type="transmembrane region" description="Helical">
    <location>
        <begin position="632"/>
        <end position="660"/>
    </location>
</feature>
<feature type="topological domain" description="Intravacuolar" evidence="6">
    <location>
        <position position="661"/>
    </location>
</feature>
<feature type="transmembrane region" description="Helical">
    <location>
        <begin position="662"/>
        <end position="689"/>
    </location>
</feature>
<feature type="topological domain" description="Cytoplasmic" evidence="6">
    <location>
        <begin position="690"/>
        <end position="732"/>
    </location>
</feature>
<feature type="transmembrane region" description="Helical">
    <location>
        <begin position="733"/>
        <end position="758"/>
    </location>
</feature>
<feature type="topological domain" description="Intravacuolar" evidence="6">
    <location>
        <begin position="759"/>
        <end position="765"/>
    </location>
</feature>
<feature type="binding site">
    <location>
        <position position="250"/>
    </location>
    <ligand>
        <name>substrate</name>
    </ligand>
</feature>
<feature type="binding site" evidence="2">
    <location>
        <position position="253"/>
    </location>
    <ligand>
        <name>Mg(2+)</name>
        <dbReference type="ChEBI" id="CHEBI:18420"/>
        <label>1</label>
    </ligand>
</feature>
<feature type="binding site" evidence="2">
    <location>
        <position position="253"/>
    </location>
    <ligand>
        <name>Mg(2+)</name>
        <dbReference type="ChEBI" id="CHEBI:18420"/>
        <label>2</label>
    </ligand>
</feature>
<feature type="binding site" evidence="2">
    <location>
        <position position="257"/>
    </location>
    <ligand>
        <name>Mg(2+)</name>
        <dbReference type="ChEBI" id="CHEBI:18420"/>
        <label>1</label>
    </ligand>
</feature>
<feature type="binding site" evidence="2">
    <location>
        <position position="283"/>
    </location>
    <ligand>
        <name>Mg(2+)</name>
        <dbReference type="ChEBI" id="CHEBI:18420"/>
        <label>3</label>
    </ligand>
</feature>
<feature type="binding site" evidence="2">
    <location>
        <position position="507"/>
    </location>
    <ligand>
        <name>Mg(2+)</name>
        <dbReference type="ChEBI" id="CHEBI:18420"/>
        <label>3</label>
    </ligand>
</feature>
<feature type="binding site" evidence="2">
    <location>
        <position position="534"/>
    </location>
    <ligand>
        <name>Mg(2+)</name>
        <dbReference type="ChEBI" id="CHEBI:18420"/>
        <label>4</label>
    </ligand>
</feature>
<feature type="binding site" evidence="2">
    <location>
        <position position="691"/>
    </location>
    <ligand>
        <name>Mg(2+)</name>
        <dbReference type="ChEBI" id="CHEBI:18420"/>
        <label>4</label>
    </ligand>
</feature>
<feature type="binding site" evidence="2">
    <location>
        <position position="727"/>
    </location>
    <ligand>
        <name>Mg(2+)</name>
        <dbReference type="ChEBI" id="CHEBI:18420"/>
        <label>2</label>
    </ligand>
</feature>
<feature type="binding site">
    <location>
        <position position="730"/>
    </location>
    <ligand>
        <name>substrate</name>
    </ligand>
</feature>
<feature type="site" description="Important for proton transport" evidence="5">
    <location>
        <position position="242"/>
    </location>
</feature>
<feature type="site" description="Important for proton transport" evidence="5">
    <location>
        <position position="287"/>
    </location>
</feature>
<feature type="site" description="Important for proton transport" evidence="5">
    <location>
        <position position="294"/>
    </location>
</feature>
<feature type="site" description="Important for proton transport" evidence="5">
    <location>
        <position position="301"/>
    </location>
</feature>
<feature type="site" description="Important for proton transport" evidence="5">
    <location>
        <position position="731"/>
    </location>
</feature>
<feature type="site" description="Important for proton transport" evidence="5">
    <location>
        <position position="742"/>
    </location>
</feature>
<feature type="disulfide bond">
    <location>
        <begin position="124"/>
        <end position="132"/>
    </location>
</feature>
<feature type="mutagenesis site" description="Reduces pyrophosphatase activity by over 90%. Abolishes proton transport." evidence="2">
    <original>D</original>
    <variation>A</variation>
    <variation>E</variation>
    <variation>G</variation>
    <variation>N</variation>
    <variation>T</variation>
    <location>
        <position position="294"/>
    </location>
</feature>
<feature type="mutagenesis site" description="Reduces pyrophosphatase activity by over 90%. Abolishes proton transport." evidence="2">
    <original>K</original>
    <variation>A</variation>
    <variation>R</variation>
    <variation>M</variation>
    <location>
        <position position="742"/>
    </location>
</feature>
<feature type="sequence conflict" description="In Ref. 3; AA sequence." evidence="5" ref="3">
    <original>G</original>
    <variation>W</variation>
    <location>
        <position position="22"/>
    </location>
</feature>
<feature type="sequence conflict" description="In Ref. 1; BAA23649." evidence="5" ref="1">
    <original>F</original>
    <variation>L</variation>
    <location>
        <position position="476"/>
    </location>
</feature>
<feature type="sequence conflict" description="In Ref. 2; AAC49175." evidence="5" ref="2">
    <location>
        <position position="687"/>
    </location>
</feature>
<feature type="helix" evidence="8">
    <location>
        <begin position="8"/>
        <end position="33"/>
    </location>
</feature>
<feature type="helix" evidence="8">
    <location>
        <begin position="68"/>
        <end position="112"/>
    </location>
</feature>
<feature type="helix" evidence="8">
    <location>
        <begin position="113"/>
        <end position="115"/>
    </location>
</feature>
<feature type="strand" evidence="8">
    <location>
        <begin position="122"/>
        <end position="124"/>
    </location>
</feature>
<feature type="strand" evidence="8">
    <location>
        <begin position="127"/>
        <end position="132"/>
    </location>
</feature>
<feature type="helix" evidence="8">
    <location>
        <begin position="135"/>
        <end position="174"/>
    </location>
</feature>
<feature type="turn" evidence="8">
    <location>
        <begin position="175"/>
        <end position="177"/>
    </location>
</feature>
<feature type="helix" evidence="8">
    <location>
        <begin position="179"/>
        <end position="216"/>
    </location>
</feature>
<feature type="helix" evidence="8">
    <location>
        <begin position="220"/>
        <end position="227"/>
    </location>
</feature>
<feature type="helix" evidence="8">
    <location>
        <begin position="229"/>
        <end position="261"/>
    </location>
</feature>
<feature type="helix" evidence="8">
    <location>
        <begin position="276"/>
        <end position="285"/>
    </location>
</feature>
<feature type="turn" evidence="8">
    <location>
        <begin position="286"/>
        <end position="288"/>
    </location>
</feature>
<feature type="helix" evidence="8">
    <location>
        <begin position="289"/>
        <end position="311"/>
    </location>
</feature>
<feature type="helix" evidence="8">
    <location>
        <begin position="314"/>
        <end position="317"/>
    </location>
</feature>
<feature type="helix" evidence="8">
    <location>
        <begin position="321"/>
        <end position="324"/>
    </location>
</feature>
<feature type="helix" evidence="8">
    <location>
        <begin position="326"/>
        <end position="346"/>
    </location>
</feature>
<feature type="helix" evidence="8">
    <location>
        <begin position="354"/>
        <end position="356"/>
    </location>
</feature>
<feature type="helix" evidence="8">
    <location>
        <begin position="357"/>
        <end position="383"/>
    </location>
</feature>
<feature type="strand" evidence="8">
    <location>
        <begin position="386"/>
        <end position="392"/>
    </location>
</feature>
<feature type="strand" evidence="8">
    <location>
        <begin position="395"/>
        <end position="400"/>
    </location>
</feature>
<feature type="helix" evidence="8">
    <location>
        <begin position="401"/>
        <end position="426"/>
    </location>
</feature>
<feature type="helix" evidence="8">
    <location>
        <begin position="431"/>
        <end position="438"/>
    </location>
</feature>
<feature type="helix" evidence="8">
    <location>
        <begin position="439"/>
        <end position="442"/>
    </location>
</feature>
<feature type="helix" evidence="8">
    <location>
        <begin position="444"/>
        <end position="458"/>
    </location>
</feature>
<feature type="helix" evidence="8">
    <location>
        <begin position="460"/>
        <end position="489"/>
    </location>
</feature>
<feature type="turn" evidence="8">
    <location>
        <begin position="490"/>
        <end position="492"/>
    </location>
</feature>
<feature type="helix" evidence="8">
    <location>
        <begin position="493"/>
        <end position="515"/>
    </location>
</feature>
<feature type="helix" evidence="8">
    <location>
        <begin position="520"/>
        <end position="562"/>
    </location>
</feature>
<feature type="strand" evidence="7">
    <location>
        <begin position="569"/>
        <end position="572"/>
    </location>
</feature>
<feature type="helix" evidence="8">
    <location>
        <begin position="573"/>
        <end position="582"/>
    </location>
</feature>
<feature type="helix" evidence="8">
    <location>
        <begin position="585"/>
        <end position="614"/>
    </location>
</feature>
<feature type="turn" evidence="8">
    <location>
        <begin position="616"/>
        <end position="621"/>
    </location>
</feature>
<feature type="helix" evidence="8">
    <location>
        <begin position="627"/>
        <end position="641"/>
    </location>
</feature>
<feature type="helix" evidence="8">
    <location>
        <begin position="643"/>
        <end position="659"/>
    </location>
</feature>
<feature type="helix" evidence="8">
    <location>
        <begin position="662"/>
        <end position="699"/>
    </location>
</feature>
<feature type="helix" evidence="8">
    <location>
        <begin position="703"/>
        <end position="708"/>
    </location>
</feature>
<feature type="helix" evidence="8">
    <location>
        <begin position="714"/>
        <end position="731"/>
    </location>
</feature>
<feature type="helix" evidence="8">
    <location>
        <begin position="734"/>
        <end position="736"/>
    </location>
</feature>
<feature type="helix" evidence="8">
    <location>
        <begin position="737"/>
        <end position="750"/>
    </location>
</feature>
<feature type="helix" evidence="8">
    <location>
        <begin position="752"/>
        <end position="758"/>
    </location>
</feature>
<feature type="helix" evidence="8">
    <location>
        <begin position="761"/>
        <end position="765"/>
    </location>
</feature>
<protein>
    <recommendedName>
        <fullName>Pyrophosphate-energized vacuolar membrane proton pump</fullName>
        <ecNumber evidence="1 2">7.1.3.1</ecNumber>
    </recommendedName>
    <alternativeName>
        <fullName>Pyrophosphate-energized inorganic pyrophosphatase</fullName>
        <shortName>H(+)-PPase</shortName>
    </alternativeName>
    <alternativeName>
        <fullName>Vacuolar H(+)-pyrophosphatase</fullName>
    </alternativeName>
</protein>
<proteinExistence type="evidence at protein level"/>
<comment type="function">
    <text evidence="1 2 3 4">Proton-translocating inorganic pyrophosphatase that contributes to the transtonoplast (from cytosol to vacuole lumen) H(+)-electrochemical potential difference. It establishes a proton gradient of similar and often greater magnitude than the H(+)-ATPase on the same membrane.</text>
</comment>
<comment type="catalytic activity">
    <reaction evidence="1 2">
        <text>diphosphate + H2O + H(+)(in) = 2 phosphate + 2 H(+)(out)</text>
        <dbReference type="Rhea" id="RHEA:13973"/>
        <dbReference type="ChEBI" id="CHEBI:15377"/>
        <dbReference type="ChEBI" id="CHEBI:15378"/>
        <dbReference type="ChEBI" id="CHEBI:33019"/>
        <dbReference type="ChEBI" id="CHEBI:43474"/>
        <dbReference type="EC" id="7.1.3.1"/>
    </reaction>
</comment>
<comment type="activity regulation">
    <text evidence="1 3">Inhibited by excess pyrophosphate as well as excess Mg(2+). Inhibition by ATP, GTP, and CTP is reversed by increasing the Mg(2+) concentration. This suggests that the substrate is a particular metal complex such as MgPPi(2-). Modification of Asp-283 with DCCD abolishes pyrophosphatase activity.</text>
</comment>
<comment type="subunit">
    <text evidence="2">Homodimer.</text>
</comment>
<comment type="subcellular location">
    <subcellularLocation>
        <location evidence="1 2 3 4">Vacuole membrane</location>
        <topology evidence="1 2 3 4">Multi-pass membrane protein</topology>
    </subcellularLocation>
    <text>Tonoplast membrane.</text>
</comment>
<comment type="developmental stage">
    <text evidence="4">Detected in the hypocotyl, with the highest expression in the rapidly expanding segment of the hypocotyl and lower expression in older, less rapidly expanding parts of the hypocotyl.</text>
</comment>
<comment type="domain">
    <text evidence="2">Has 16 transmembrane helices and a large cytoplasmic domain that contains the active site.</text>
</comment>
<comment type="miscellaneous">
    <text>Has few direct interactions with pyrophosphate. Interacts with the substrate via divalent metal cations, such as magnesium ions, that are bound to the pyrophosphate.</text>
</comment>
<comment type="similarity">
    <text evidence="5">Belongs to the H(+)-translocating pyrophosphatase (TC 3.A.10) family. K(+)-stimulated subfamily.</text>
</comment>
<name>AVP_VIGRR</name>